<accession>O06989</accession>
<accession>Q795G8</accession>
<gene>
    <name type="primary">mdxE</name>
    <name type="synonym">yvdG</name>
    <name type="ordered locus">BSU34610</name>
</gene>
<evidence type="ECO:0000255" key="1">
    <source>
        <dbReference type="PROSITE-ProRule" id="PRU00303"/>
    </source>
</evidence>
<evidence type="ECO:0000269" key="2">
    <source>
    </source>
</evidence>
<evidence type="ECO:0000305" key="3"/>
<reference key="1">
    <citation type="submission" date="1997-04" db="EMBL/GenBank/DDBJ databases">
        <authorList>
            <person name="Denizot F."/>
        </authorList>
    </citation>
    <scope>NUCLEOTIDE SEQUENCE [GENOMIC DNA]</scope>
</reference>
<reference key="2">
    <citation type="journal article" date="1997" name="Nature">
        <title>The complete genome sequence of the Gram-positive bacterium Bacillus subtilis.</title>
        <authorList>
            <person name="Kunst F."/>
            <person name="Ogasawara N."/>
            <person name="Moszer I."/>
            <person name="Albertini A.M."/>
            <person name="Alloni G."/>
            <person name="Azevedo V."/>
            <person name="Bertero M.G."/>
            <person name="Bessieres P."/>
            <person name="Bolotin A."/>
            <person name="Borchert S."/>
            <person name="Borriss R."/>
            <person name="Boursier L."/>
            <person name="Brans A."/>
            <person name="Braun M."/>
            <person name="Brignell S.C."/>
            <person name="Bron S."/>
            <person name="Brouillet S."/>
            <person name="Bruschi C.V."/>
            <person name="Caldwell B."/>
            <person name="Capuano V."/>
            <person name="Carter N.M."/>
            <person name="Choi S.-K."/>
            <person name="Codani J.-J."/>
            <person name="Connerton I.F."/>
            <person name="Cummings N.J."/>
            <person name="Daniel R.A."/>
            <person name="Denizot F."/>
            <person name="Devine K.M."/>
            <person name="Duesterhoeft A."/>
            <person name="Ehrlich S.D."/>
            <person name="Emmerson P.T."/>
            <person name="Entian K.-D."/>
            <person name="Errington J."/>
            <person name="Fabret C."/>
            <person name="Ferrari E."/>
            <person name="Foulger D."/>
            <person name="Fritz C."/>
            <person name="Fujita M."/>
            <person name="Fujita Y."/>
            <person name="Fuma S."/>
            <person name="Galizzi A."/>
            <person name="Galleron N."/>
            <person name="Ghim S.-Y."/>
            <person name="Glaser P."/>
            <person name="Goffeau A."/>
            <person name="Golightly E.J."/>
            <person name="Grandi G."/>
            <person name="Guiseppi G."/>
            <person name="Guy B.J."/>
            <person name="Haga K."/>
            <person name="Haiech J."/>
            <person name="Harwood C.R."/>
            <person name="Henaut A."/>
            <person name="Hilbert H."/>
            <person name="Holsappel S."/>
            <person name="Hosono S."/>
            <person name="Hullo M.-F."/>
            <person name="Itaya M."/>
            <person name="Jones L.-M."/>
            <person name="Joris B."/>
            <person name="Karamata D."/>
            <person name="Kasahara Y."/>
            <person name="Klaerr-Blanchard M."/>
            <person name="Klein C."/>
            <person name="Kobayashi Y."/>
            <person name="Koetter P."/>
            <person name="Koningstein G."/>
            <person name="Krogh S."/>
            <person name="Kumano M."/>
            <person name="Kurita K."/>
            <person name="Lapidus A."/>
            <person name="Lardinois S."/>
            <person name="Lauber J."/>
            <person name="Lazarevic V."/>
            <person name="Lee S.-M."/>
            <person name="Levine A."/>
            <person name="Liu H."/>
            <person name="Masuda S."/>
            <person name="Mauel C."/>
            <person name="Medigue C."/>
            <person name="Medina N."/>
            <person name="Mellado R.P."/>
            <person name="Mizuno M."/>
            <person name="Moestl D."/>
            <person name="Nakai S."/>
            <person name="Noback M."/>
            <person name="Noone D."/>
            <person name="O'Reilly M."/>
            <person name="Ogawa K."/>
            <person name="Ogiwara A."/>
            <person name="Oudega B."/>
            <person name="Park S.-H."/>
            <person name="Parro V."/>
            <person name="Pohl T.M."/>
            <person name="Portetelle D."/>
            <person name="Porwollik S."/>
            <person name="Prescott A.M."/>
            <person name="Presecan E."/>
            <person name="Pujic P."/>
            <person name="Purnelle B."/>
            <person name="Rapoport G."/>
            <person name="Rey M."/>
            <person name="Reynolds S."/>
            <person name="Rieger M."/>
            <person name="Rivolta C."/>
            <person name="Rocha E."/>
            <person name="Roche B."/>
            <person name="Rose M."/>
            <person name="Sadaie Y."/>
            <person name="Sato T."/>
            <person name="Scanlan E."/>
            <person name="Schleich S."/>
            <person name="Schroeter R."/>
            <person name="Scoffone F."/>
            <person name="Sekiguchi J."/>
            <person name="Sekowska A."/>
            <person name="Seror S.J."/>
            <person name="Serror P."/>
            <person name="Shin B.-S."/>
            <person name="Soldo B."/>
            <person name="Sorokin A."/>
            <person name="Tacconi E."/>
            <person name="Takagi T."/>
            <person name="Takahashi H."/>
            <person name="Takemaru K."/>
            <person name="Takeuchi M."/>
            <person name="Tamakoshi A."/>
            <person name="Tanaka T."/>
            <person name="Terpstra P."/>
            <person name="Tognoni A."/>
            <person name="Tosato V."/>
            <person name="Uchiyama S."/>
            <person name="Vandenbol M."/>
            <person name="Vannier F."/>
            <person name="Vassarotti A."/>
            <person name="Viari A."/>
            <person name="Wambutt R."/>
            <person name="Wedler E."/>
            <person name="Wedler H."/>
            <person name="Weitzenegger T."/>
            <person name="Winters P."/>
            <person name="Wipat A."/>
            <person name="Yamamoto H."/>
            <person name="Yamane K."/>
            <person name="Yasumoto K."/>
            <person name="Yata K."/>
            <person name="Yoshida K."/>
            <person name="Yoshikawa H.-F."/>
            <person name="Zumstein E."/>
            <person name="Yoshikawa H."/>
            <person name="Danchin A."/>
        </authorList>
    </citation>
    <scope>NUCLEOTIDE SEQUENCE [LARGE SCALE GENOMIC DNA]</scope>
    <source>
        <strain>168</strain>
    </source>
</reference>
<reference key="3">
    <citation type="journal article" date="2006" name="J. Bacteriol.">
        <title>Maltose and maltodextrin utilization by Bacillus subtilis.</title>
        <authorList>
            <person name="Schoenert S."/>
            <person name="Seitz S."/>
            <person name="Krafft H."/>
            <person name="Feuerbaum E.-A."/>
            <person name="Andernach I."/>
            <person name="Witz G."/>
            <person name="Dahl M.K."/>
        </authorList>
    </citation>
    <scope>FUNCTION AS A MALTODEXTRIN-BINDING PROTEIN</scope>
    <scope>INDUCTION</scope>
    <scope>ACTIVITY REGULATION</scope>
    <scope>GENE NAME</scope>
    <source>
        <strain>168</strain>
    </source>
</reference>
<name>MDXE_BACSU</name>
<organism>
    <name type="scientific">Bacillus subtilis (strain 168)</name>
    <dbReference type="NCBI Taxonomy" id="224308"/>
    <lineage>
        <taxon>Bacteria</taxon>
        <taxon>Bacillati</taxon>
        <taxon>Bacillota</taxon>
        <taxon>Bacilli</taxon>
        <taxon>Bacillales</taxon>
        <taxon>Bacillaceae</taxon>
        <taxon>Bacillus</taxon>
    </lineage>
</organism>
<sequence>MVLLKKGFAILAASFLAIGLAACSSSKNPASSDGKKVLTVSVEETYKEYIESIKTKFEKENDVTVKIVEKQMFEQLEALPLDGPAGNAPDVMLAAYDRIGGLGQQGHLLDIKPSNTKSFGDKEMQQVTVDGKVYGMPLVIETLILYYNKDLLKTAPKTFKDLEKLTEDPRFAFASEKGKSTGFLAKWTDFYMSYGLLAGYGGYVFGKNGTDSGDIGLNNKGAVEAVKYAEKWFETYWPKGMQDNSSADDFIQQMFLEGKAAAIIGGPWSAANYKEAKLNYGAAPIPTLPNGEEYAPFAGGKGWVASKYTKEPELAEKWLEYAANDANAYAFYEDTNEVPANTAARKKADEQKNELTSAVIKQYETATPTPNIPEMAEVWTGAESLIFDAASGKKSTQTSANDAVNVIKENIKEKYVK</sequence>
<dbReference type="EMBL" id="Z94043">
    <property type="protein sequence ID" value="CAB08036.1"/>
    <property type="molecule type" value="Genomic_DNA"/>
</dbReference>
<dbReference type="EMBL" id="AL009126">
    <property type="protein sequence ID" value="CAB15466.1"/>
    <property type="molecule type" value="Genomic_DNA"/>
</dbReference>
<dbReference type="PIR" id="G70033">
    <property type="entry name" value="G70033"/>
</dbReference>
<dbReference type="RefSeq" id="NP_391341.1">
    <property type="nucleotide sequence ID" value="NC_000964.3"/>
</dbReference>
<dbReference type="RefSeq" id="WP_003243721.1">
    <property type="nucleotide sequence ID" value="NZ_OZ025638.1"/>
</dbReference>
<dbReference type="SMR" id="O06989"/>
<dbReference type="FunCoup" id="O06989">
    <property type="interactions" value="195"/>
</dbReference>
<dbReference type="STRING" id="224308.BSU34610"/>
<dbReference type="TCDB" id="3.A.1.1.26">
    <property type="family name" value="the atp-binding cassette (abc) superfamily"/>
</dbReference>
<dbReference type="PaxDb" id="224308-BSU34610"/>
<dbReference type="EnsemblBacteria" id="CAB15466">
    <property type="protein sequence ID" value="CAB15466"/>
    <property type="gene ID" value="BSU_34610"/>
</dbReference>
<dbReference type="GeneID" id="936522"/>
<dbReference type="KEGG" id="bsu:BSU34610"/>
<dbReference type="PATRIC" id="fig|224308.179.peg.3748"/>
<dbReference type="eggNOG" id="COG2182">
    <property type="taxonomic scope" value="Bacteria"/>
</dbReference>
<dbReference type="InParanoid" id="O06989"/>
<dbReference type="OrthoDB" id="9766758at2"/>
<dbReference type="PhylomeDB" id="O06989"/>
<dbReference type="BioCyc" id="BSUB:BSU34610-MONOMER"/>
<dbReference type="SABIO-RK" id="O06989"/>
<dbReference type="Proteomes" id="UP000001570">
    <property type="component" value="Chromosome"/>
</dbReference>
<dbReference type="GO" id="GO:0055052">
    <property type="term" value="C:ATP-binding cassette (ABC) transporter complex, substrate-binding subunit-containing"/>
    <property type="evidence" value="ECO:0000318"/>
    <property type="project" value="GO_Central"/>
</dbReference>
<dbReference type="GO" id="GO:0015144">
    <property type="term" value="F:carbohydrate transmembrane transporter activity"/>
    <property type="evidence" value="ECO:0007669"/>
    <property type="project" value="InterPro"/>
</dbReference>
<dbReference type="GO" id="GO:1901982">
    <property type="term" value="F:maltose binding"/>
    <property type="evidence" value="ECO:0000318"/>
    <property type="project" value="GO_Central"/>
</dbReference>
<dbReference type="GO" id="GO:0042956">
    <property type="term" value="P:maltodextrin transmembrane transport"/>
    <property type="evidence" value="ECO:0000318"/>
    <property type="project" value="GO_Central"/>
</dbReference>
<dbReference type="GO" id="GO:0015768">
    <property type="term" value="P:maltose transport"/>
    <property type="evidence" value="ECO:0000318"/>
    <property type="project" value="GO_Central"/>
</dbReference>
<dbReference type="CDD" id="cd13658">
    <property type="entry name" value="PBP2_CMBP"/>
    <property type="match status" value="1"/>
</dbReference>
<dbReference type="Gene3D" id="3.40.190.10">
    <property type="entry name" value="Periplasmic binding protein-like II"/>
    <property type="match status" value="2"/>
</dbReference>
<dbReference type="InterPro" id="IPR006060">
    <property type="entry name" value="Maltose/Cyclodextrin-bd"/>
</dbReference>
<dbReference type="InterPro" id="IPR006059">
    <property type="entry name" value="SBP"/>
</dbReference>
<dbReference type="PANTHER" id="PTHR30061">
    <property type="entry name" value="MALTOSE-BINDING PERIPLASMIC PROTEIN"/>
    <property type="match status" value="1"/>
</dbReference>
<dbReference type="PANTHER" id="PTHR30061:SF50">
    <property type="entry name" value="MALTOSE_MALTODEXTRIN-BINDING PERIPLASMIC PROTEIN"/>
    <property type="match status" value="1"/>
</dbReference>
<dbReference type="Pfam" id="PF01547">
    <property type="entry name" value="SBP_bac_1"/>
    <property type="match status" value="1"/>
</dbReference>
<dbReference type="PRINTS" id="PR00181">
    <property type="entry name" value="MALTOSEBP"/>
</dbReference>
<dbReference type="SUPFAM" id="SSF53850">
    <property type="entry name" value="Periplasmic binding protein-like II"/>
    <property type="match status" value="1"/>
</dbReference>
<dbReference type="PROSITE" id="PS51257">
    <property type="entry name" value="PROKAR_LIPOPROTEIN"/>
    <property type="match status" value="1"/>
</dbReference>
<protein>
    <recommendedName>
        <fullName>Maltodextrin-binding protein MdxE</fullName>
    </recommendedName>
</protein>
<proteinExistence type="evidence at protein level"/>
<keyword id="KW-1003">Cell membrane</keyword>
<keyword id="KW-0449">Lipoprotein</keyword>
<keyword id="KW-0472">Membrane</keyword>
<keyword id="KW-0564">Palmitate</keyword>
<keyword id="KW-0625">Polysaccharide transport</keyword>
<keyword id="KW-1185">Reference proteome</keyword>
<keyword id="KW-0732">Signal</keyword>
<keyword id="KW-0762">Sugar transport</keyword>
<keyword id="KW-0813">Transport</keyword>
<feature type="signal peptide" evidence="1">
    <location>
        <begin position="1"/>
        <end position="22"/>
    </location>
</feature>
<feature type="chain" id="PRO_0000360702" description="Maltodextrin-binding protein MdxE">
    <location>
        <begin position="23"/>
        <end position="417"/>
    </location>
</feature>
<feature type="lipid moiety-binding region" description="N-palmitoyl cysteine" evidence="1">
    <location>
        <position position="23"/>
    </location>
</feature>
<feature type="lipid moiety-binding region" description="S-diacylglycerol cysteine" evidence="1">
    <location>
        <position position="23"/>
    </location>
</feature>
<comment type="function">
    <text evidence="2">Part of the ABC transporter complex involved in maltodextrin import. Binds maltodextrin. Can also bind maltose with low affinity, but is not involved in its uptake.</text>
</comment>
<comment type="activity regulation">
    <text evidence="2">Inhibited by glucose and lactose.</text>
</comment>
<comment type="subunit">
    <text evidence="3">The complex is composed of two ATP-binding proteins (MsmX), two transmembrane proteins (MdxF and MdxG) and a solute-binding protein (MdxE).</text>
</comment>
<comment type="subcellular location">
    <subcellularLocation>
        <location evidence="1">Cell membrane</location>
        <topology evidence="1">Lipid-anchor</topology>
    </subcellularLocation>
</comment>
<comment type="induction">
    <text evidence="2">Induced by maltose and repressed by glucose.</text>
</comment>
<comment type="miscellaneous">
    <text>Maltodextrin can also be transported inside the cell after degradation to maltose by extracellular amylase AmyE, transported as maltose by MalP.</text>
</comment>
<comment type="similarity">
    <text evidence="3">Belongs to the bacterial solute-binding protein 1 family.</text>
</comment>